<dbReference type="EC" id="1.5.1.5" evidence="1"/>
<dbReference type="EC" id="3.5.4.9" evidence="1"/>
<dbReference type="EMBL" id="CP000089">
    <property type="protein sequence ID" value="AAZ45205.1"/>
    <property type="molecule type" value="Genomic_DNA"/>
</dbReference>
<dbReference type="SMR" id="Q47IX6"/>
<dbReference type="STRING" id="159087.Daro_0448"/>
<dbReference type="KEGG" id="dar:Daro_0448"/>
<dbReference type="eggNOG" id="COG0190">
    <property type="taxonomic scope" value="Bacteria"/>
</dbReference>
<dbReference type="HOGENOM" id="CLU_034045_2_1_4"/>
<dbReference type="OrthoDB" id="9803580at2"/>
<dbReference type="UniPathway" id="UPA00193"/>
<dbReference type="GO" id="GO:0005829">
    <property type="term" value="C:cytosol"/>
    <property type="evidence" value="ECO:0007669"/>
    <property type="project" value="TreeGrafter"/>
</dbReference>
<dbReference type="GO" id="GO:0004477">
    <property type="term" value="F:methenyltetrahydrofolate cyclohydrolase activity"/>
    <property type="evidence" value="ECO:0007669"/>
    <property type="project" value="UniProtKB-UniRule"/>
</dbReference>
<dbReference type="GO" id="GO:0004488">
    <property type="term" value="F:methylenetetrahydrofolate dehydrogenase (NADP+) activity"/>
    <property type="evidence" value="ECO:0007669"/>
    <property type="project" value="UniProtKB-UniRule"/>
</dbReference>
<dbReference type="GO" id="GO:0000105">
    <property type="term" value="P:L-histidine biosynthetic process"/>
    <property type="evidence" value="ECO:0007669"/>
    <property type="project" value="UniProtKB-KW"/>
</dbReference>
<dbReference type="GO" id="GO:0009086">
    <property type="term" value="P:methionine biosynthetic process"/>
    <property type="evidence" value="ECO:0007669"/>
    <property type="project" value="UniProtKB-KW"/>
</dbReference>
<dbReference type="GO" id="GO:0006164">
    <property type="term" value="P:purine nucleotide biosynthetic process"/>
    <property type="evidence" value="ECO:0007669"/>
    <property type="project" value="UniProtKB-KW"/>
</dbReference>
<dbReference type="GO" id="GO:0035999">
    <property type="term" value="P:tetrahydrofolate interconversion"/>
    <property type="evidence" value="ECO:0007669"/>
    <property type="project" value="UniProtKB-UniRule"/>
</dbReference>
<dbReference type="CDD" id="cd01080">
    <property type="entry name" value="NAD_bind_m-THF_DH_Cyclohyd"/>
    <property type="match status" value="1"/>
</dbReference>
<dbReference type="FunFam" id="3.40.50.720:FF:000094">
    <property type="entry name" value="Bifunctional protein FolD"/>
    <property type="match status" value="1"/>
</dbReference>
<dbReference type="FunFam" id="3.40.50.10860:FF:000005">
    <property type="entry name" value="C-1-tetrahydrofolate synthase, cytoplasmic, putative"/>
    <property type="match status" value="1"/>
</dbReference>
<dbReference type="Gene3D" id="3.40.50.10860">
    <property type="entry name" value="Leucine Dehydrogenase, chain A, domain 1"/>
    <property type="match status" value="1"/>
</dbReference>
<dbReference type="Gene3D" id="3.40.50.720">
    <property type="entry name" value="NAD(P)-binding Rossmann-like Domain"/>
    <property type="match status" value="1"/>
</dbReference>
<dbReference type="HAMAP" id="MF_01576">
    <property type="entry name" value="THF_DHG_CYH"/>
    <property type="match status" value="1"/>
</dbReference>
<dbReference type="InterPro" id="IPR046346">
    <property type="entry name" value="Aminoacid_DH-like_N_sf"/>
</dbReference>
<dbReference type="InterPro" id="IPR036291">
    <property type="entry name" value="NAD(P)-bd_dom_sf"/>
</dbReference>
<dbReference type="InterPro" id="IPR000672">
    <property type="entry name" value="THF_DH/CycHdrlase"/>
</dbReference>
<dbReference type="InterPro" id="IPR020630">
    <property type="entry name" value="THF_DH/CycHdrlase_cat_dom"/>
</dbReference>
<dbReference type="InterPro" id="IPR020867">
    <property type="entry name" value="THF_DH/CycHdrlase_CS"/>
</dbReference>
<dbReference type="InterPro" id="IPR020631">
    <property type="entry name" value="THF_DH/CycHdrlase_NAD-bd_dom"/>
</dbReference>
<dbReference type="NCBIfam" id="NF008058">
    <property type="entry name" value="PRK10792.1"/>
    <property type="match status" value="1"/>
</dbReference>
<dbReference type="NCBIfam" id="NF010783">
    <property type="entry name" value="PRK14186.1"/>
    <property type="match status" value="1"/>
</dbReference>
<dbReference type="NCBIfam" id="NF010786">
    <property type="entry name" value="PRK14189.1"/>
    <property type="match status" value="1"/>
</dbReference>
<dbReference type="PANTHER" id="PTHR48099:SF5">
    <property type="entry name" value="C-1-TETRAHYDROFOLATE SYNTHASE, CYTOPLASMIC"/>
    <property type="match status" value="1"/>
</dbReference>
<dbReference type="PANTHER" id="PTHR48099">
    <property type="entry name" value="C-1-TETRAHYDROFOLATE SYNTHASE, CYTOPLASMIC-RELATED"/>
    <property type="match status" value="1"/>
</dbReference>
<dbReference type="Pfam" id="PF00763">
    <property type="entry name" value="THF_DHG_CYH"/>
    <property type="match status" value="1"/>
</dbReference>
<dbReference type="Pfam" id="PF02882">
    <property type="entry name" value="THF_DHG_CYH_C"/>
    <property type="match status" value="1"/>
</dbReference>
<dbReference type="PRINTS" id="PR00085">
    <property type="entry name" value="THFDHDRGNASE"/>
</dbReference>
<dbReference type="SUPFAM" id="SSF53223">
    <property type="entry name" value="Aminoacid dehydrogenase-like, N-terminal domain"/>
    <property type="match status" value="1"/>
</dbReference>
<dbReference type="SUPFAM" id="SSF51735">
    <property type="entry name" value="NAD(P)-binding Rossmann-fold domains"/>
    <property type="match status" value="1"/>
</dbReference>
<dbReference type="PROSITE" id="PS00767">
    <property type="entry name" value="THF_DHG_CYH_2"/>
    <property type="match status" value="1"/>
</dbReference>
<comment type="function">
    <text evidence="1">Catalyzes the oxidation of 5,10-methylenetetrahydrofolate to 5,10-methenyltetrahydrofolate and then the hydrolysis of 5,10-methenyltetrahydrofolate to 10-formyltetrahydrofolate.</text>
</comment>
<comment type="catalytic activity">
    <reaction evidence="1">
        <text>(6R)-5,10-methylene-5,6,7,8-tetrahydrofolate + NADP(+) = (6R)-5,10-methenyltetrahydrofolate + NADPH</text>
        <dbReference type="Rhea" id="RHEA:22812"/>
        <dbReference type="ChEBI" id="CHEBI:15636"/>
        <dbReference type="ChEBI" id="CHEBI:57455"/>
        <dbReference type="ChEBI" id="CHEBI:57783"/>
        <dbReference type="ChEBI" id="CHEBI:58349"/>
        <dbReference type="EC" id="1.5.1.5"/>
    </reaction>
</comment>
<comment type="catalytic activity">
    <reaction evidence="1">
        <text>(6R)-5,10-methenyltetrahydrofolate + H2O = (6R)-10-formyltetrahydrofolate + H(+)</text>
        <dbReference type="Rhea" id="RHEA:23700"/>
        <dbReference type="ChEBI" id="CHEBI:15377"/>
        <dbReference type="ChEBI" id="CHEBI:15378"/>
        <dbReference type="ChEBI" id="CHEBI:57455"/>
        <dbReference type="ChEBI" id="CHEBI:195366"/>
        <dbReference type="EC" id="3.5.4.9"/>
    </reaction>
</comment>
<comment type="pathway">
    <text evidence="1">One-carbon metabolism; tetrahydrofolate interconversion.</text>
</comment>
<comment type="subunit">
    <text evidence="1">Homodimer.</text>
</comment>
<comment type="similarity">
    <text evidence="1">Belongs to the tetrahydrofolate dehydrogenase/cyclohydrolase family.</text>
</comment>
<reference key="1">
    <citation type="journal article" date="2009" name="BMC Genomics">
        <title>Metabolic analysis of the soil microbe Dechloromonas aromatica str. RCB: indications of a surprisingly complex life-style and cryptic anaerobic pathways for aromatic degradation.</title>
        <authorList>
            <person name="Salinero K.K."/>
            <person name="Keller K."/>
            <person name="Feil W.S."/>
            <person name="Feil H."/>
            <person name="Trong S."/>
            <person name="Di Bartolo G."/>
            <person name="Lapidus A."/>
        </authorList>
    </citation>
    <scope>NUCLEOTIDE SEQUENCE [LARGE SCALE GENOMIC DNA]</scope>
    <source>
        <strain>RCB</strain>
    </source>
</reference>
<feature type="chain" id="PRO_0000268329" description="Bifunctional protein FolD">
    <location>
        <begin position="1"/>
        <end position="284"/>
    </location>
</feature>
<feature type="binding site" evidence="1">
    <location>
        <begin position="165"/>
        <end position="167"/>
    </location>
    <ligand>
        <name>NADP(+)</name>
        <dbReference type="ChEBI" id="CHEBI:58349"/>
    </ligand>
</feature>
<feature type="binding site" evidence="1">
    <location>
        <position position="190"/>
    </location>
    <ligand>
        <name>NADP(+)</name>
        <dbReference type="ChEBI" id="CHEBI:58349"/>
    </ligand>
</feature>
<feature type="binding site" evidence="1">
    <location>
        <position position="231"/>
    </location>
    <ligand>
        <name>NADP(+)</name>
        <dbReference type="ChEBI" id="CHEBI:58349"/>
    </ligand>
</feature>
<proteinExistence type="inferred from homology"/>
<name>FOLD_DECAR</name>
<protein>
    <recommendedName>
        <fullName evidence="1">Bifunctional protein FolD</fullName>
    </recommendedName>
    <domain>
        <recommendedName>
            <fullName evidence="1">Methylenetetrahydrofolate dehydrogenase</fullName>
            <ecNumber evidence="1">1.5.1.5</ecNumber>
        </recommendedName>
    </domain>
    <domain>
        <recommendedName>
            <fullName evidence="1">Methenyltetrahydrofolate cyclohydrolase</fullName>
            <ecNumber evidence="1">3.5.4.9</ecNumber>
        </recommendedName>
    </domain>
</protein>
<keyword id="KW-0028">Amino-acid biosynthesis</keyword>
<keyword id="KW-0368">Histidine biosynthesis</keyword>
<keyword id="KW-0378">Hydrolase</keyword>
<keyword id="KW-0486">Methionine biosynthesis</keyword>
<keyword id="KW-0511">Multifunctional enzyme</keyword>
<keyword id="KW-0521">NADP</keyword>
<keyword id="KW-0554">One-carbon metabolism</keyword>
<keyword id="KW-0560">Oxidoreductase</keyword>
<keyword id="KW-0658">Purine biosynthesis</keyword>
<gene>
    <name evidence="1" type="primary">folD</name>
    <name type="ordered locus">Daro_0448</name>
</gene>
<sequence>MTAQIIDGKALAEELRQGFKARVEALTAKGHKPGLVVILVGADPASEVYVRNKVNGCLAIGMHSEKITYDATIDQATVLNKIAELNADPNIHGILVQLPLPKHFDEEAVLEAISAEKDVDGFHAENVGALAQGNPRFIPCTPYGVMKMFEKGNVDLTGKEAVVIGRSNIVGKPMALLLINAGATVTVCNSRTKDLKFHTSRADILVAAVGKPKFVTGDMVKPGAVVIDVGINRLPDGKLCGDVDFASCLEVAGQITPVPGGVGPMTITMLLANTIEAAERKAGL</sequence>
<evidence type="ECO:0000255" key="1">
    <source>
        <dbReference type="HAMAP-Rule" id="MF_01576"/>
    </source>
</evidence>
<accession>Q47IX6</accession>
<organism>
    <name type="scientific">Dechloromonas aromatica (strain RCB)</name>
    <dbReference type="NCBI Taxonomy" id="159087"/>
    <lineage>
        <taxon>Bacteria</taxon>
        <taxon>Pseudomonadati</taxon>
        <taxon>Pseudomonadota</taxon>
        <taxon>Betaproteobacteria</taxon>
        <taxon>Rhodocyclales</taxon>
        <taxon>Azonexaceae</taxon>
        <taxon>Dechloromonas</taxon>
    </lineage>
</organism>